<proteinExistence type="inferred from homology"/>
<gene>
    <name evidence="1" type="primary">rpsD</name>
    <name type="ordered locus">Mkms_1129</name>
</gene>
<accession>A1UBY4</accession>
<feature type="chain" id="PRO_0000293317" description="Small ribosomal subunit protein uS4">
    <location>
        <begin position="1"/>
        <end position="201"/>
    </location>
</feature>
<feature type="domain" description="S4 RNA-binding" evidence="1">
    <location>
        <begin position="91"/>
        <end position="157"/>
    </location>
</feature>
<feature type="region of interest" description="Disordered" evidence="2">
    <location>
        <begin position="1"/>
        <end position="38"/>
    </location>
</feature>
<sequence>MARYTGPATRKSRRLGVDLVGGDQSFEKRPYPPGQHGRARIKESEYRTQLQEKQKARFTYGVLEKQFRRYYDEANRQPGKTGDNLLRILESRLDNVVYRAGLARTRRMARQLVSHGHFTVNGVKVDIPSYRVSQYDIIDVREKSLNTDPFVIARETAGDRPIPSWLQVVGERQRILVHQLPERAQIDVPLTEQLIVELYSK</sequence>
<comment type="function">
    <text evidence="1">One of the primary rRNA binding proteins, it binds directly to 16S rRNA where it nucleates assembly of the body of the 30S subunit.</text>
</comment>
<comment type="function">
    <text evidence="1">With S5 and S12 plays an important role in translational accuracy.</text>
</comment>
<comment type="subunit">
    <text evidence="1">Part of the 30S ribosomal subunit. Contacts protein S5. The interaction surface between S4 and S5 is involved in control of translational fidelity.</text>
</comment>
<comment type="similarity">
    <text evidence="1">Belongs to the universal ribosomal protein uS4 family.</text>
</comment>
<dbReference type="EMBL" id="CP000518">
    <property type="protein sequence ID" value="ABL90342.1"/>
    <property type="molecule type" value="Genomic_DNA"/>
</dbReference>
<dbReference type="SMR" id="A1UBY4"/>
<dbReference type="STRING" id="189918.Mkms_1129"/>
<dbReference type="KEGG" id="mkm:Mkms_1129"/>
<dbReference type="HOGENOM" id="CLU_092403_0_2_11"/>
<dbReference type="OrthoDB" id="9803672at2"/>
<dbReference type="GO" id="GO:0015935">
    <property type="term" value="C:small ribosomal subunit"/>
    <property type="evidence" value="ECO:0007669"/>
    <property type="project" value="InterPro"/>
</dbReference>
<dbReference type="GO" id="GO:0019843">
    <property type="term" value="F:rRNA binding"/>
    <property type="evidence" value="ECO:0007669"/>
    <property type="project" value="UniProtKB-UniRule"/>
</dbReference>
<dbReference type="GO" id="GO:0003735">
    <property type="term" value="F:structural constituent of ribosome"/>
    <property type="evidence" value="ECO:0007669"/>
    <property type="project" value="InterPro"/>
</dbReference>
<dbReference type="GO" id="GO:0042274">
    <property type="term" value="P:ribosomal small subunit biogenesis"/>
    <property type="evidence" value="ECO:0007669"/>
    <property type="project" value="TreeGrafter"/>
</dbReference>
<dbReference type="GO" id="GO:0006412">
    <property type="term" value="P:translation"/>
    <property type="evidence" value="ECO:0007669"/>
    <property type="project" value="UniProtKB-UniRule"/>
</dbReference>
<dbReference type="CDD" id="cd00165">
    <property type="entry name" value="S4"/>
    <property type="match status" value="1"/>
</dbReference>
<dbReference type="FunFam" id="1.10.1050.10:FF:000001">
    <property type="entry name" value="30S ribosomal protein S4"/>
    <property type="match status" value="1"/>
</dbReference>
<dbReference type="FunFam" id="3.10.290.10:FF:000001">
    <property type="entry name" value="30S ribosomal protein S4"/>
    <property type="match status" value="1"/>
</dbReference>
<dbReference type="Gene3D" id="1.10.1050.10">
    <property type="entry name" value="Ribosomal Protein S4 Delta 41, Chain A, domain 1"/>
    <property type="match status" value="1"/>
</dbReference>
<dbReference type="Gene3D" id="3.10.290.10">
    <property type="entry name" value="RNA-binding S4 domain"/>
    <property type="match status" value="1"/>
</dbReference>
<dbReference type="HAMAP" id="MF_01306_B">
    <property type="entry name" value="Ribosomal_uS4_B"/>
    <property type="match status" value="1"/>
</dbReference>
<dbReference type="InterPro" id="IPR022801">
    <property type="entry name" value="Ribosomal_uS4"/>
</dbReference>
<dbReference type="InterPro" id="IPR005709">
    <property type="entry name" value="Ribosomal_uS4_bac-type"/>
</dbReference>
<dbReference type="InterPro" id="IPR018079">
    <property type="entry name" value="Ribosomal_uS4_CS"/>
</dbReference>
<dbReference type="InterPro" id="IPR001912">
    <property type="entry name" value="Ribosomal_uS4_N"/>
</dbReference>
<dbReference type="InterPro" id="IPR002942">
    <property type="entry name" value="S4_RNA-bd"/>
</dbReference>
<dbReference type="InterPro" id="IPR036986">
    <property type="entry name" value="S4_RNA-bd_sf"/>
</dbReference>
<dbReference type="NCBIfam" id="NF003717">
    <property type="entry name" value="PRK05327.1"/>
    <property type="match status" value="1"/>
</dbReference>
<dbReference type="NCBIfam" id="TIGR01017">
    <property type="entry name" value="rpsD_bact"/>
    <property type="match status" value="1"/>
</dbReference>
<dbReference type="PANTHER" id="PTHR11831">
    <property type="entry name" value="30S 40S RIBOSOMAL PROTEIN"/>
    <property type="match status" value="1"/>
</dbReference>
<dbReference type="PANTHER" id="PTHR11831:SF4">
    <property type="entry name" value="SMALL RIBOSOMAL SUBUNIT PROTEIN US4M"/>
    <property type="match status" value="1"/>
</dbReference>
<dbReference type="Pfam" id="PF00163">
    <property type="entry name" value="Ribosomal_S4"/>
    <property type="match status" value="1"/>
</dbReference>
<dbReference type="Pfam" id="PF01479">
    <property type="entry name" value="S4"/>
    <property type="match status" value="1"/>
</dbReference>
<dbReference type="SMART" id="SM01390">
    <property type="entry name" value="Ribosomal_S4"/>
    <property type="match status" value="1"/>
</dbReference>
<dbReference type="SMART" id="SM00363">
    <property type="entry name" value="S4"/>
    <property type="match status" value="1"/>
</dbReference>
<dbReference type="SUPFAM" id="SSF55174">
    <property type="entry name" value="Alpha-L RNA-binding motif"/>
    <property type="match status" value="1"/>
</dbReference>
<dbReference type="PROSITE" id="PS00632">
    <property type="entry name" value="RIBOSOMAL_S4"/>
    <property type="match status" value="1"/>
</dbReference>
<dbReference type="PROSITE" id="PS50889">
    <property type="entry name" value="S4"/>
    <property type="match status" value="1"/>
</dbReference>
<reference key="1">
    <citation type="submission" date="2006-12" db="EMBL/GenBank/DDBJ databases">
        <title>Complete sequence of chromosome of Mycobacterium sp. KMS.</title>
        <authorList>
            <consortium name="US DOE Joint Genome Institute"/>
            <person name="Copeland A."/>
            <person name="Lucas S."/>
            <person name="Lapidus A."/>
            <person name="Barry K."/>
            <person name="Detter J.C."/>
            <person name="Glavina del Rio T."/>
            <person name="Hammon N."/>
            <person name="Israni S."/>
            <person name="Dalin E."/>
            <person name="Tice H."/>
            <person name="Pitluck S."/>
            <person name="Kiss H."/>
            <person name="Brettin T."/>
            <person name="Bruce D."/>
            <person name="Han C."/>
            <person name="Tapia R."/>
            <person name="Gilna P."/>
            <person name="Schmutz J."/>
            <person name="Larimer F."/>
            <person name="Land M."/>
            <person name="Hauser L."/>
            <person name="Kyrpides N."/>
            <person name="Mikhailova N."/>
            <person name="Miller C.D."/>
            <person name="Richardson P."/>
        </authorList>
    </citation>
    <scope>NUCLEOTIDE SEQUENCE [LARGE SCALE GENOMIC DNA]</scope>
    <source>
        <strain>KMS</strain>
    </source>
</reference>
<name>RS4_MYCSK</name>
<organism>
    <name type="scientific">Mycobacterium sp. (strain KMS)</name>
    <dbReference type="NCBI Taxonomy" id="189918"/>
    <lineage>
        <taxon>Bacteria</taxon>
        <taxon>Bacillati</taxon>
        <taxon>Actinomycetota</taxon>
        <taxon>Actinomycetes</taxon>
        <taxon>Mycobacteriales</taxon>
        <taxon>Mycobacteriaceae</taxon>
        <taxon>Mycobacterium</taxon>
    </lineage>
</organism>
<keyword id="KW-0687">Ribonucleoprotein</keyword>
<keyword id="KW-0689">Ribosomal protein</keyword>
<keyword id="KW-0694">RNA-binding</keyword>
<keyword id="KW-0699">rRNA-binding</keyword>
<evidence type="ECO:0000255" key="1">
    <source>
        <dbReference type="HAMAP-Rule" id="MF_01306"/>
    </source>
</evidence>
<evidence type="ECO:0000256" key="2">
    <source>
        <dbReference type="SAM" id="MobiDB-lite"/>
    </source>
</evidence>
<evidence type="ECO:0000305" key="3"/>
<protein>
    <recommendedName>
        <fullName evidence="1">Small ribosomal subunit protein uS4</fullName>
    </recommendedName>
    <alternativeName>
        <fullName evidence="3">30S ribosomal protein S4</fullName>
    </alternativeName>
</protein>